<organism>
    <name type="scientific">Rhodopirellula baltica (strain DSM 10527 / NCIMB 13988 / SH1)</name>
    <dbReference type="NCBI Taxonomy" id="243090"/>
    <lineage>
        <taxon>Bacteria</taxon>
        <taxon>Pseudomonadati</taxon>
        <taxon>Planctomycetota</taxon>
        <taxon>Planctomycetia</taxon>
        <taxon>Pirellulales</taxon>
        <taxon>Pirellulaceae</taxon>
        <taxon>Rhodopirellula</taxon>
    </lineage>
</organism>
<protein>
    <recommendedName>
        <fullName evidence="1">Translational regulator CsrA</fullName>
    </recommendedName>
</protein>
<dbReference type="EMBL" id="BX294147">
    <property type="protein sequence ID" value="CAD78491.1"/>
    <property type="molecule type" value="Genomic_DNA"/>
</dbReference>
<dbReference type="RefSeq" id="NP_868213.1">
    <property type="nucleotide sequence ID" value="NC_005027.1"/>
</dbReference>
<dbReference type="RefSeq" id="WP_007327053.1">
    <property type="nucleotide sequence ID" value="NC_005027.1"/>
</dbReference>
<dbReference type="SMR" id="Q7UG38"/>
<dbReference type="FunCoup" id="Q7UG38">
    <property type="interactions" value="182"/>
</dbReference>
<dbReference type="STRING" id="243090.RB8149"/>
<dbReference type="EnsemblBacteria" id="CAD78491">
    <property type="protein sequence ID" value="CAD78491"/>
    <property type="gene ID" value="RB8149"/>
</dbReference>
<dbReference type="KEGG" id="rba:RB8149"/>
<dbReference type="PATRIC" id="fig|243090.15.peg.3930"/>
<dbReference type="eggNOG" id="COG1551">
    <property type="taxonomic scope" value="Bacteria"/>
</dbReference>
<dbReference type="HOGENOM" id="CLU_164837_0_2_0"/>
<dbReference type="InParanoid" id="Q7UG38"/>
<dbReference type="OrthoDB" id="9809061at2"/>
<dbReference type="Proteomes" id="UP000001025">
    <property type="component" value="Chromosome"/>
</dbReference>
<dbReference type="GO" id="GO:0005829">
    <property type="term" value="C:cytosol"/>
    <property type="evidence" value="ECO:0000318"/>
    <property type="project" value="GO_Central"/>
</dbReference>
<dbReference type="GO" id="GO:0048027">
    <property type="term" value="F:mRNA 5'-UTR binding"/>
    <property type="evidence" value="ECO:0007669"/>
    <property type="project" value="UniProtKB-UniRule"/>
</dbReference>
<dbReference type="GO" id="GO:0044781">
    <property type="term" value="P:bacterial-type flagellum organization"/>
    <property type="evidence" value="ECO:0007669"/>
    <property type="project" value="UniProtKB-KW"/>
</dbReference>
<dbReference type="GO" id="GO:0006402">
    <property type="term" value="P:mRNA catabolic process"/>
    <property type="evidence" value="ECO:0007669"/>
    <property type="project" value="InterPro"/>
</dbReference>
<dbReference type="GO" id="GO:0045947">
    <property type="term" value="P:negative regulation of translational initiation"/>
    <property type="evidence" value="ECO:0007669"/>
    <property type="project" value="UniProtKB-UniRule"/>
</dbReference>
<dbReference type="GO" id="GO:1902208">
    <property type="term" value="P:regulation of bacterial-type flagellum assembly"/>
    <property type="evidence" value="ECO:0007669"/>
    <property type="project" value="UniProtKB-UniRule"/>
</dbReference>
<dbReference type="GO" id="GO:0006109">
    <property type="term" value="P:regulation of carbohydrate metabolic process"/>
    <property type="evidence" value="ECO:0007669"/>
    <property type="project" value="InterPro"/>
</dbReference>
<dbReference type="FunFam" id="2.60.40.4380:FF:000002">
    <property type="entry name" value="Translational regulator CsrA"/>
    <property type="match status" value="1"/>
</dbReference>
<dbReference type="Gene3D" id="2.60.40.4380">
    <property type="entry name" value="Translational regulator CsrA"/>
    <property type="match status" value="1"/>
</dbReference>
<dbReference type="HAMAP" id="MF_00167">
    <property type="entry name" value="CsrA"/>
    <property type="match status" value="1"/>
</dbReference>
<dbReference type="InterPro" id="IPR003751">
    <property type="entry name" value="CsrA"/>
</dbReference>
<dbReference type="InterPro" id="IPR036107">
    <property type="entry name" value="CsrA_sf"/>
</dbReference>
<dbReference type="NCBIfam" id="TIGR00202">
    <property type="entry name" value="csrA"/>
    <property type="match status" value="1"/>
</dbReference>
<dbReference type="NCBIfam" id="NF002469">
    <property type="entry name" value="PRK01712.1"/>
    <property type="match status" value="1"/>
</dbReference>
<dbReference type="PANTHER" id="PTHR34984">
    <property type="entry name" value="CARBON STORAGE REGULATOR"/>
    <property type="match status" value="1"/>
</dbReference>
<dbReference type="PANTHER" id="PTHR34984:SF1">
    <property type="entry name" value="CARBON STORAGE REGULATOR"/>
    <property type="match status" value="1"/>
</dbReference>
<dbReference type="Pfam" id="PF02599">
    <property type="entry name" value="CsrA"/>
    <property type="match status" value="1"/>
</dbReference>
<dbReference type="SUPFAM" id="SSF117130">
    <property type="entry name" value="CsrA-like"/>
    <property type="match status" value="1"/>
</dbReference>
<sequence>MLVLSRKKNESIVINNDIKIVVVEIRGDKVRLGVEAPREVPVHRREVYDAIQRNNEAFDANAPADSNDVS</sequence>
<reference key="1">
    <citation type="journal article" date="2003" name="Proc. Natl. Acad. Sci. U.S.A.">
        <title>Complete genome sequence of the marine planctomycete Pirellula sp. strain 1.</title>
        <authorList>
            <person name="Gloeckner F.O."/>
            <person name="Kube M."/>
            <person name="Bauer M."/>
            <person name="Teeling H."/>
            <person name="Lombardot T."/>
            <person name="Ludwig W."/>
            <person name="Gade D."/>
            <person name="Beck A."/>
            <person name="Borzym K."/>
            <person name="Heitmann K."/>
            <person name="Rabus R."/>
            <person name="Schlesner H."/>
            <person name="Amann R."/>
            <person name="Reinhardt R."/>
        </authorList>
    </citation>
    <scope>NUCLEOTIDE SEQUENCE [LARGE SCALE GENOMIC DNA]</scope>
    <source>
        <strain>DSM 10527 / NCIMB 13988 / SH1</strain>
    </source>
</reference>
<accession>Q7UG38</accession>
<gene>
    <name evidence="1" type="primary">csrA</name>
    <name type="ordered locus">RB8149</name>
</gene>
<name>CSRA_RHOBA</name>
<proteinExistence type="inferred from homology"/>
<keyword id="KW-1005">Bacterial flagellum biogenesis</keyword>
<keyword id="KW-0963">Cytoplasm</keyword>
<keyword id="KW-1185">Reference proteome</keyword>
<keyword id="KW-0678">Repressor</keyword>
<keyword id="KW-0694">RNA-binding</keyword>
<keyword id="KW-0810">Translation regulation</keyword>
<comment type="function">
    <text evidence="1">A translational regulator that binds mRNA to regulate translation initiation and/or mRNA stability. Usually binds in the 5'-UTR at or near the Shine-Dalgarno sequence preventing ribosome-binding, thus repressing translation. Its main target seems to be the major flagellin gene, while its function is anatagonized by FliW.</text>
</comment>
<comment type="subunit">
    <text evidence="1">Homodimer; the beta-strands of each monomer intercalate to form a hydrophobic core, while the alpha-helices form wings that extend away from the core.</text>
</comment>
<comment type="subcellular location">
    <subcellularLocation>
        <location evidence="1">Cytoplasm</location>
    </subcellularLocation>
</comment>
<comment type="similarity">
    <text evidence="1">Belongs to the CsrA/RsmA family.</text>
</comment>
<feature type="chain" id="PRO_0000177086" description="Translational regulator CsrA">
    <location>
        <begin position="1"/>
        <end position="70"/>
    </location>
</feature>
<evidence type="ECO:0000255" key="1">
    <source>
        <dbReference type="HAMAP-Rule" id="MF_00167"/>
    </source>
</evidence>